<sequence>MENDAGENVDLYVPRKCSASNRIIHAKDHASVQLSIVVVDPETGRQTDGTKTYAICGEIRRMGESDDCIVRLAKKDGLITKNF</sequence>
<keyword id="KW-0963">Cytoplasm</keyword>
<keyword id="KW-0217">Developmental protein</keyword>
<keyword id="KW-0256">Endoplasmic reticulum</keyword>
<keyword id="KW-1185">Reference proteome</keyword>
<keyword id="KW-0687">Ribonucleoprotein</keyword>
<keyword id="KW-0689">Ribosomal protein</keyword>
<keyword id="KW-0698">rRNA processing</keyword>
<keyword id="KW-0810">Translation regulation</keyword>
<feature type="chain" id="PRO_0000395424" description="Small ribosomal subunit protein eS21">
    <location>
        <begin position="1"/>
        <end position="83"/>
    </location>
</feature>
<name>RS21_DROVI</name>
<gene>
    <name type="primary">RpS21</name>
    <name type="synonym">oho23B</name>
    <name type="ORF">GJ13417</name>
</gene>
<protein>
    <recommendedName>
        <fullName evidence="5">Small ribosomal subunit protein eS21</fullName>
    </recommendedName>
    <alternativeName>
        <fullName evidence="1">40S ribosomal protein S21</fullName>
    </alternativeName>
    <alternativeName>
        <fullName evidence="1">Overgrown hematopoietic organs at 23B</fullName>
    </alternativeName>
</protein>
<comment type="function">
    <text evidence="1">May be an associated component of the ribosome rather than a core structural subunit. May act as a translation initiation factor. Has a role in regulation of cell proliferation in the hematopoietic organs and the imaginal disks of larva (By similarity).</text>
</comment>
<comment type="subunit">
    <text evidence="1">Component of the 40S small ribosomal subunit. Interacts with sta.</text>
</comment>
<comment type="subcellular location">
    <subcellularLocation>
        <location evidence="2">Cytoplasm</location>
        <location evidence="2">Cytosol</location>
    </subcellularLocation>
    <subcellularLocation>
        <location evidence="2">Cytoplasm</location>
    </subcellularLocation>
    <subcellularLocation>
        <location evidence="3">Rough endoplasmic reticulum</location>
    </subcellularLocation>
    <text evidence="2 3">Detected on cytosolic polysomes (By similarity). Detected in ribosomes that are associated with the rough endoplasmic reticulum (By similarity).</text>
</comment>
<comment type="similarity">
    <text evidence="4">Belongs to the eukaryotic ribosomal protein eS21 family.</text>
</comment>
<comment type="sequence caution" evidence="5">
    <conflict type="erroneous gene model prediction">
        <sequence resource="EMBL-CDS" id="EDW63383"/>
    </conflict>
</comment>
<reference evidence="6" key="1">
    <citation type="journal article" date="2007" name="Nature">
        <title>Evolution of genes and genomes on the Drosophila phylogeny.</title>
        <authorList>
            <consortium name="Drosophila 12 genomes consortium"/>
        </authorList>
    </citation>
    <scope>NUCLEOTIDE SEQUENCE [LARGE SCALE GENOMIC DNA]</scope>
    <source>
        <strain evidence="6">Tucson 15010-1051.87</strain>
    </source>
</reference>
<accession>B4LQD3</accession>
<evidence type="ECO:0000250" key="1">
    <source>
        <dbReference type="UniProtKB" id="O76927"/>
    </source>
</evidence>
<evidence type="ECO:0000250" key="2">
    <source>
        <dbReference type="UniProtKB" id="P63220"/>
    </source>
</evidence>
<evidence type="ECO:0000250" key="3">
    <source>
        <dbReference type="UniProtKB" id="P63221"/>
    </source>
</evidence>
<evidence type="ECO:0000255" key="4"/>
<evidence type="ECO:0000305" key="5"/>
<evidence type="ECO:0000312" key="6">
    <source>
        <dbReference type="EMBL" id="EDW63383.1"/>
    </source>
</evidence>
<organism>
    <name type="scientific">Drosophila virilis</name>
    <name type="common">Fruit fly</name>
    <dbReference type="NCBI Taxonomy" id="7244"/>
    <lineage>
        <taxon>Eukaryota</taxon>
        <taxon>Metazoa</taxon>
        <taxon>Ecdysozoa</taxon>
        <taxon>Arthropoda</taxon>
        <taxon>Hexapoda</taxon>
        <taxon>Insecta</taxon>
        <taxon>Pterygota</taxon>
        <taxon>Neoptera</taxon>
        <taxon>Endopterygota</taxon>
        <taxon>Diptera</taxon>
        <taxon>Brachycera</taxon>
        <taxon>Muscomorpha</taxon>
        <taxon>Ephydroidea</taxon>
        <taxon>Drosophilidae</taxon>
        <taxon>Drosophila</taxon>
    </lineage>
</organism>
<proteinExistence type="inferred from homology"/>
<dbReference type="EMBL" id="CH940649">
    <property type="protein sequence ID" value="EDW63383.1"/>
    <property type="status" value="ALT_SEQ"/>
    <property type="molecule type" value="Genomic_DNA"/>
</dbReference>
<dbReference type="RefSeq" id="XP_002051228.2">
    <property type="nucleotide sequence ID" value="XM_002051192.4"/>
</dbReference>
<dbReference type="SMR" id="B4LQD3"/>
<dbReference type="FunCoup" id="B4LQD3">
    <property type="interactions" value="1397"/>
</dbReference>
<dbReference type="STRING" id="7244.B4LQD3"/>
<dbReference type="EnsemblMetazoa" id="FBtr0229342">
    <property type="protein sequence ID" value="FBpp0227834"/>
    <property type="gene ID" value="FBgn0200642"/>
</dbReference>
<dbReference type="EnsemblMetazoa" id="XM_002051192.3">
    <property type="protein sequence ID" value="XP_002051228.2"/>
    <property type="gene ID" value="LOC6628805"/>
</dbReference>
<dbReference type="GeneID" id="6628805"/>
<dbReference type="KEGG" id="dvi:6628805"/>
<dbReference type="CTD" id="6227"/>
<dbReference type="eggNOG" id="KOG3486">
    <property type="taxonomic scope" value="Eukaryota"/>
</dbReference>
<dbReference type="InParanoid" id="B4LQD3"/>
<dbReference type="OrthoDB" id="278325at2759"/>
<dbReference type="ChiTaRS" id="RpS21">
    <property type="organism name" value="fly"/>
</dbReference>
<dbReference type="Proteomes" id="UP000008792">
    <property type="component" value="Unassembled WGS sequence"/>
</dbReference>
<dbReference type="GO" id="GO:0005829">
    <property type="term" value="C:cytosol"/>
    <property type="evidence" value="ECO:0007669"/>
    <property type="project" value="UniProtKB-SubCell"/>
</dbReference>
<dbReference type="GO" id="GO:1990904">
    <property type="term" value="C:ribonucleoprotein complex"/>
    <property type="evidence" value="ECO:0007669"/>
    <property type="project" value="UniProtKB-KW"/>
</dbReference>
<dbReference type="GO" id="GO:0005840">
    <property type="term" value="C:ribosome"/>
    <property type="evidence" value="ECO:0000250"/>
    <property type="project" value="UniProtKB"/>
</dbReference>
<dbReference type="GO" id="GO:0005791">
    <property type="term" value="C:rough endoplasmic reticulum"/>
    <property type="evidence" value="ECO:0007669"/>
    <property type="project" value="UniProtKB-SubCell"/>
</dbReference>
<dbReference type="GO" id="GO:0043022">
    <property type="term" value="F:ribosome binding"/>
    <property type="evidence" value="ECO:0000250"/>
    <property type="project" value="UniProtKB"/>
</dbReference>
<dbReference type="GO" id="GO:0003735">
    <property type="term" value="F:structural constituent of ribosome"/>
    <property type="evidence" value="ECO:0007669"/>
    <property type="project" value="InterPro"/>
</dbReference>
<dbReference type="GO" id="GO:0042127">
    <property type="term" value="P:regulation of cell population proliferation"/>
    <property type="evidence" value="ECO:0000250"/>
    <property type="project" value="UniProtKB"/>
</dbReference>
<dbReference type="GO" id="GO:0006417">
    <property type="term" value="P:regulation of translation"/>
    <property type="evidence" value="ECO:0007669"/>
    <property type="project" value="UniProtKB-KW"/>
</dbReference>
<dbReference type="GO" id="GO:0006364">
    <property type="term" value="P:rRNA processing"/>
    <property type="evidence" value="ECO:0007669"/>
    <property type="project" value="UniProtKB-KW"/>
</dbReference>
<dbReference type="GO" id="GO:0006412">
    <property type="term" value="P:translation"/>
    <property type="evidence" value="ECO:0007669"/>
    <property type="project" value="InterPro"/>
</dbReference>
<dbReference type="FunFam" id="3.30.1230.20:FF:000001">
    <property type="entry name" value="40S ribosomal protein S21"/>
    <property type="match status" value="1"/>
</dbReference>
<dbReference type="Gene3D" id="3.30.1230.20">
    <property type="match status" value="1"/>
</dbReference>
<dbReference type="InterPro" id="IPR001931">
    <property type="entry name" value="Ribosomal_eS21"/>
</dbReference>
<dbReference type="InterPro" id="IPR018279">
    <property type="entry name" value="Ribosomal_eS21_CS"/>
</dbReference>
<dbReference type="InterPro" id="IPR038579">
    <property type="entry name" value="Ribosomal_eS21_sf"/>
</dbReference>
<dbReference type="PANTHER" id="PTHR10442">
    <property type="entry name" value="40S RIBOSOMAL PROTEIN S21"/>
    <property type="match status" value="1"/>
</dbReference>
<dbReference type="Pfam" id="PF01249">
    <property type="entry name" value="Ribosomal_S21e"/>
    <property type="match status" value="1"/>
</dbReference>
<dbReference type="PIRSF" id="PIRSF002148">
    <property type="entry name" value="Ribosomal_S21e"/>
    <property type="match status" value="1"/>
</dbReference>
<dbReference type="PROSITE" id="PS00996">
    <property type="entry name" value="RIBOSOMAL_S21E"/>
    <property type="match status" value="1"/>
</dbReference>